<comment type="function">
    <text evidence="1">Component of the acetyl coenzyme A carboxylase (ACC) complex. Biotin carboxylase (BC) catalyzes the carboxylation of biotin on its carrier protein (BCCP) and then the CO(2) group is transferred by the transcarboxylase to acetyl-CoA to form malonyl-CoA.</text>
</comment>
<comment type="catalytic activity">
    <reaction evidence="1">
        <text>N(6)-carboxybiotinyl-L-lysyl-[protein] + acetyl-CoA = N(6)-biotinyl-L-lysyl-[protein] + malonyl-CoA</text>
        <dbReference type="Rhea" id="RHEA:54728"/>
        <dbReference type="Rhea" id="RHEA-COMP:10505"/>
        <dbReference type="Rhea" id="RHEA-COMP:10506"/>
        <dbReference type="ChEBI" id="CHEBI:57288"/>
        <dbReference type="ChEBI" id="CHEBI:57384"/>
        <dbReference type="ChEBI" id="CHEBI:83144"/>
        <dbReference type="ChEBI" id="CHEBI:83145"/>
        <dbReference type="EC" id="2.1.3.15"/>
    </reaction>
</comment>
<comment type="cofactor">
    <cofactor evidence="1">
        <name>Zn(2+)</name>
        <dbReference type="ChEBI" id="CHEBI:29105"/>
    </cofactor>
    <text evidence="1">Binds 1 zinc ion per subunit.</text>
</comment>
<comment type="pathway">
    <text evidence="1">Lipid metabolism; malonyl-CoA biosynthesis; malonyl-CoA from acetyl-CoA: step 1/1.</text>
</comment>
<comment type="subunit">
    <text evidence="1">Acetyl-CoA carboxylase is a heterohexamer composed of biotin carboxyl carrier protein (AccB), biotin carboxylase (AccC) and two subunits each of ACCase subunit alpha (AccA) and ACCase subunit beta (AccD).</text>
</comment>
<comment type="subcellular location">
    <subcellularLocation>
        <location evidence="1">Cytoplasm</location>
    </subcellularLocation>
</comment>
<comment type="similarity">
    <text evidence="1">Belongs to the AccD/PCCB family.</text>
</comment>
<accession>Q3MGS5</accession>
<dbReference type="EC" id="2.1.3.15" evidence="1"/>
<dbReference type="EMBL" id="CP000117">
    <property type="protein sequence ID" value="ABA19811.1"/>
    <property type="molecule type" value="Genomic_DNA"/>
</dbReference>
<dbReference type="SMR" id="Q3MGS5"/>
<dbReference type="STRING" id="240292.Ava_0185"/>
<dbReference type="KEGG" id="ava:Ava_0185"/>
<dbReference type="eggNOG" id="COG0777">
    <property type="taxonomic scope" value="Bacteria"/>
</dbReference>
<dbReference type="HOGENOM" id="CLU_015486_1_1_3"/>
<dbReference type="UniPathway" id="UPA00655">
    <property type="reaction ID" value="UER00711"/>
</dbReference>
<dbReference type="Proteomes" id="UP000002533">
    <property type="component" value="Chromosome"/>
</dbReference>
<dbReference type="GO" id="GO:0009317">
    <property type="term" value="C:acetyl-CoA carboxylase complex"/>
    <property type="evidence" value="ECO:0007669"/>
    <property type="project" value="InterPro"/>
</dbReference>
<dbReference type="GO" id="GO:0003989">
    <property type="term" value="F:acetyl-CoA carboxylase activity"/>
    <property type="evidence" value="ECO:0007669"/>
    <property type="project" value="InterPro"/>
</dbReference>
<dbReference type="GO" id="GO:0005524">
    <property type="term" value="F:ATP binding"/>
    <property type="evidence" value="ECO:0007669"/>
    <property type="project" value="UniProtKB-KW"/>
</dbReference>
<dbReference type="GO" id="GO:0016743">
    <property type="term" value="F:carboxyl- or carbamoyltransferase activity"/>
    <property type="evidence" value="ECO:0007669"/>
    <property type="project" value="UniProtKB-UniRule"/>
</dbReference>
<dbReference type="GO" id="GO:0008270">
    <property type="term" value="F:zinc ion binding"/>
    <property type="evidence" value="ECO:0007669"/>
    <property type="project" value="UniProtKB-UniRule"/>
</dbReference>
<dbReference type="GO" id="GO:0006633">
    <property type="term" value="P:fatty acid biosynthetic process"/>
    <property type="evidence" value="ECO:0007669"/>
    <property type="project" value="UniProtKB-KW"/>
</dbReference>
<dbReference type="GO" id="GO:2001295">
    <property type="term" value="P:malonyl-CoA biosynthetic process"/>
    <property type="evidence" value="ECO:0007669"/>
    <property type="project" value="UniProtKB-UniRule"/>
</dbReference>
<dbReference type="Gene3D" id="3.90.226.10">
    <property type="entry name" value="2-enoyl-CoA Hydratase, Chain A, domain 1"/>
    <property type="match status" value="1"/>
</dbReference>
<dbReference type="HAMAP" id="MF_01395">
    <property type="entry name" value="AcetylCoA_CT_beta"/>
    <property type="match status" value="1"/>
</dbReference>
<dbReference type="InterPro" id="IPR034733">
    <property type="entry name" value="AcCoA_carboxyl_beta"/>
</dbReference>
<dbReference type="InterPro" id="IPR000438">
    <property type="entry name" value="Acetyl_CoA_COase_Trfase_b_su"/>
</dbReference>
<dbReference type="InterPro" id="IPR029045">
    <property type="entry name" value="ClpP/crotonase-like_dom_sf"/>
</dbReference>
<dbReference type="InterPro" id="IPR011762">
    <property type="entry name" value="COA_CT_N"/>
</dbReference>
<dbReference type="InterPro" id="IPR041010">
    <property type="entry name" value="Znf-ACC"/>
</dbReference>
<dbReference type="NCBIfam" id="TIGR00515">
    <property type="entry name" value="accD"/>
    <property type="match status" value="1"/>
</dbReference>
<dbReference type="PANTHER" id="PTHR42995">
    <property type="entry name" value="ACETYL-COENZYME A CARBOXYLASE CARBOXYL TRANSFERASE SUBUNIT BETA, CHLOROPLASTIC"/>
    <property type="match status" value="1"/>
</dbReference>
<dbReference type="PANTHER" id="PTHR42995:SF5">
    <property type="entry name" value="ACETYL-COENZYME A CARBOXYLASE CARBOXYL TRANSFERASE SUBUNIT BETA, CHLOROPLASTIC"/>
    <property type="match status" value="1"/>
</dbReference>
<dbReference type="Pfam" id="PF01039">
    <property type="entry name" value="Carboxyl_trans"/>
    <property type="match status" value="1"/>
</dbReference>
<dbReference type="Pfam" id="PF17848">
    <property type="entry name" value="Zn_ribbon_ACC"/>
    <property type="match status" value="1"/>
</dbReference>
<dbReference type="PRINTS" id="PR01070">
    <property type="entry name" value="ACCCTRFRASEB"/>
</dbReference>
<dbReference type="SUPFAM" id="SSF52096">
    <property type="entry name" value="ClpP/crotonase"/>
    <property type="match status" value="1"/>
</dbReference>
<dbReference type="PROSITE" id="PS50980">
    <property type="entry name" value="COA_CT_NTER"/>
    <property type="match status" value="1"/>
</dbReference>
<keyword id="KW-0067">ATP-binding</keyword>
<keyword id="KW-0963">Cytoplasm</keyword>
<keyword id="KW-0275">Fatty acid biosynthesis</keyword>
<keyword id="KW-0276">Fatty acid metabolism</keyword>
<keyword id="KW-0444">Lipid biosynthesis</keyword>
<keyword id="KW-0443">Lipid metabolism</keyword>
<keyword id="KW-0479">Metal-binding</keyword>
<keyword id="KW-0547">Nucleotide-binding</keyword>
<keyword id="KW-0808">Transferase</keyword>
<keyword id="KW-0862">Zinc</keyword>
<keyword id="KW-0863">Zinc-finger</keyword>
<feature type="chain" id="PRO_0000358954" description="Acetyl-coenzyme A carboxylase carboxyl transferase subunit beta">
    <location>
        <begin position="1"/>
        <end position="316"/>
    </location>
</feature>
<feature type="domain" description="CoA carboxyltransferase N-terminal" evidence="2">
    <location>
        <begin position="39"/>
        <end position="308"/>
    </location>
</feature>
<feature type="zinc finger region" description="C4-type" evidence="1">
    <location>
        <begin position="43"/>
        <end position="65"/>
    </location>
</feature>
<feature type="binding site" evidence="1">
    <location>
        <position position="43"/>
    </location>
    <ligand>
        <name>Zn(2+)</name>
        <dbReference type="ChEBI" id="CHEBI:29105"/>
    </ligand>
</feature>
<feature type="binding site" evidence="1">
    <location>
        <position position="46"/>
    </location>
    <ligand>
        <name>Zn(2+)</name>
        <dbReference type="ChEBI" id="CHEBI:29105"/>
    </ligand>
</feature>
<feature type="binding site" evidence="1">
    <location>
        <position position="62"/>
    </location>
    <ligand>
        <name>Zn(2+)</name>
        <dbReference type="ChEBI" id="CHEBI:29105"/>
    </ligand>
</feature>
<feature type="binding site" evidence="1">
    <location>
        <position position="65"/>
    </location>
    <ligand>
        <name>Zn(2+)</name>
        <dbReference type="ChEBI" id="CHEBI:29105"/>
    </ligand>
</feature>
<gene>
    <name evidence="1" type="primary">accD</name>
    <name type="ordered locus">Ava_0185</name>
</gene>
<organism>
    <name type="scientific">Trichormus variabilis (strain ATCC 29413 / PCC 7937)</name>
    <name type="common">Anabaena variabilis</name>
    <dbReference type="NCBI Taxonomy" id="240292"/>
    <lineage>
        <taxon>Bacteria</taxon>
        <taxon>Bacillati</taxon>
        <taxon>Cyanobacteriota</taxon>
        <taxon>Cyanophyceae</taxon>
        <taxon>Nostocales</taxon>
        <taxon>Nostocaceae</taxon>
        <taxon>Trichormus</taxon>
    </lineage>
</organism>
<proteinExistence type="inferred from homology"/>
<sequence>MANNEESRGLKSLFDWFANRRKAGATNPERQEREIADGLWHKCSKCGVLTYTKDLRANQMVCVECGHHNRVDSDERIRQLIDQNTWRPMDENLRATDPLQFRDRKAYSDRLREMEDKLGLLDAVKTGLGQINSSPVALAVMDFRFMGGSMGSVVGEKITRLIEQATQRRYPVVIICTSGGARMQEGMLSLMQMAKISAALERHRDARLLYIPVLTNPTTGGVTASFAMLGDIILAEPKATIGFAGRRVIEQTLREKLPDDFQTAEDLLKHGFVDDIVPRTQLKNTLSQLIALHQPVPTTPPMVLWETMSLSSTAAE</sequence>
<evidence type="ECO:0000255" key="1">
    <source>
        <dbReference type="HAMAP-Rule" id="MF_01395"/>
    </source>
</evidence>
<evidence type="ECO:0000255" key="2">
    <source>
        <dbReference type="PROSITE-ProRule" id="PRU01136"/>
    </source>
</evidence>
<reference key="1">
    <citation type="journal article" date="2014" name="Stand. Genomic Sci.">
        <title>Complete genome sequence of Anabaena variabilis ATCC 29413.</title>
        <authorList>
            <person name="Thiel T."/>
            <person name="Pratte B.S."/>
            <person name="Zhong J."/>
            <person name="Goodwin L."/>
            <person name="Copeland A."/>
            <person name="Lucas S."/>
            <person name="Han C."/>
            <person name="Pitluck S."/>
            <person name="Land M.L."/>
            <person name="Kyrpides N.C."/>
            <person name="Woyke T."/>
        </authorList>
    </citation>
    <scope>NUCLEOTIDE SEQUENCE [LARGE SCALE GENOMIC DNA]</scope>
    <source>
        <strain>ATCC 29413 / PCC 7937</strain>
    </source>
</reference>
<protein>
    <recommendedName>
        <fullName evidence="1">Acetyl-coenzyme A carboxylase carboxyl transferase subunit beta</fullName>
        <shortName evidence="1">ACCase subunit beta</shortName>
        <shortName evidence="1">Acetyl-CoA carboxylase carboxyltransferase subunit beta</shortName>
        <ecNumber evidence="1">2.1.3.15</ecNumber>
    </recommendedName>
</protein>
<name>ACCD_TRIV2</name>